<organismHost>
    <name type="scientific">Anas</name>
    <name type="common">ducks</name>
    <dbReference type="NCBI Taxonomy" id="8835"/>
</organismHost>
<sequence>MDINASRALANVYDLPDDFFPKIDDLVRDAKDALEPYWKSDSIKKHVLIATHFVDLIEDFWQTTQGMHEIAESLRAVIPPTTAPVPTGYLIQHEEAEEIPLGDLFKHQEERIVSFQPDYPITARIHAHLKAYAKINEESLDRARRLLWWHYNCLLWGEANVTNYISRLRTWLSTPEKYRGRDAPTIEAITRPIQVAQGGRKTSSGTRKPRGLEPRRRKVKTTFVYGRRRSKSRERRAPSPQRAGSPLPRSSSSHHRSPSPRK</sequence>
<feature type="chain" id="PRO_0000324348" description="Capsid protein">
    <location>
        <begin position="1"/>
        <end position="262"/>
    </location>
</feature>
<feature type="region of interest" description="Disordered" evidence="4">
    <location>
        <begin position="183"/>
        <end position="262"/>
    </location>
</feature>
<feature type="region of interest" description="RNA binding" evidence="1">
    <location>
        <begin position="254"/>
        <end position="260"/>
    </location>
</feature>
<feature type="short sequence motif" description="Bipartite nuclear localization signal" evidence="3">
    <location>
        <begin position="215"/>
        <end position="233"/>
    </location>
</feature>
<feature type="compositionally biased region" description="Basic residues" evidence="4">
    <location>
        <begin position="215"/>
        <end position="234"/>
    </location>
</feature>
<feature type="compositionally biased region" description="Basic residues" evidence="4">
    <location>
        <begin position="252"/>
        <end position="262"/>
    </location>
</feature>
<feature type="modified residue" description="Phosphoserine; by host" evidence="1">
    <location>
        <position position="232"/>
    </location>
</feature>
<feature type="modified residue" description="Phosphoserine; by host" evidence="1">
    <location>
        <position position="239"/>
    </location>
</feature>
<feature type="modified residue" description="Phosphoserine; by host" evidence="1">
    <location>
        <position position="245"/>
    </location>
</feature>
<dbReference type="EMBL" id="M32991">
    <property type="status" value="NOT_ANNOTATED_CDS"/>
    <property type="molecule type" value="Genomic_DNA"/>
</dbReference>
<dbReference type="SMR" id="P0C6K2"/>
<dbReference type="Proteomes" id="UP000007558">
    <property type="component" value="Genome"/>
</dbReference>
<dbReference type="GO" id="GO:0043657">
    <property type="term" value="C:host cell"/>
    <property type="evidence" value="ECO:0007669"/>
    <property type="project" value="GOC"/>
</dbReference>
<dbReference type="GO" id="GO:0030430">
    <property type="term" value="C:host cell cytoplasm"/>
    <property type="evidence" value="ECO:0007669"/>
    <property type="project" value="UniProtKB-SubCell"/>
</dbReference>
<dbReference type="GO" id="GO:0039619">
    <property type="term" value="C:T=4 icosahedral viral capsid"/>
    <property type="evidence" value="ECO:0007669"/>
    <property type="project" value="UniProtKB-KW"/>
</dbReference>
<dbReference type="GO" id="GO:0003677">
    <property type="term" value="F:DNA binding"/>
    <property type="evidence" value="ECO:0007669"/>
    <property type="project" value="UniProtKB-KW"/>
</dbReference>
<dbReference type="GO" id="GO:0003723">
    <property type="term" value="F:RNA binding"/>
    <property type="evidence" value="ECO:0007669"/>
    <property type="project" value="UniProtKB-KW"/>
</dbReference>
<dbReference type="GO" id="GO:0005198">
    <property type="term" value="F:structural molecule activity"/>
    <property type="evidence" value="ECO:0007669"/>
    <property type="project" value="InterPro"/>
</dbReference>
<dbReference type="GO" id="GO:0075521">
    <property type="term" value="P:microtubule-dependent intracellular transport of viral material towards nucleus"/>
    <property type="evidence" value="ECO:0007669"/>
    <property type="project" value="UniProtKB-KW"/>
</dbReference>
<dbReference type="GO" id="GO:0046718">
    <property type="term" value="P:symbiont entry into host cell"/>
    <property type="evidence" value="ECO:0007669"/>
    <property type="project" value="UniProtKB-KW"/>
</dbReference>
<dbReference type="GO" id="GO:0075732">
    <property type="term" value="P:viral penetration into host nucleus"/>
    <property type="evidence" value="ECO:0007669"/>
    <property type="project" value="UniProtKB-KW"/>
</dbReference>
<dbReference type="Gene3D" id="1.10.4090.10">
    <property type="entry name" value="Viral capsid, core domain supefamily, Hepatitis B virus"/>
    <property type="match status" value="2"/>
</dbReference>
<dbReference type="InterPro" id="IPR002006">
    <property type="entry name" value="Hepatitis_core"/>
</dbReference>
<dbReference type="InterPro" id="IPR036459">
    <property type="entry name" value="Viral_capsid_core_dom_sf_HBV"/>
</dbReference>
<dbReference type="Pfam" id="PF00906">
    <property type="entry name" value="Hepatitis_core"/>
    <property type="match status" value="1"/>
</dbReference>
<dbReference type="SUPFAM" id="SSF47852">
    <property type="entry name" value="Hepatitis B viral capsid (hbcag)"/>
    <property type="match status" value="1"/>
</dbReference>
<proteinExistence type="inferred from homology"/>
<keyword id="KW-0024">Alternative initiation</keyword>
<keyword id="KW-0167">Capsid protein</keyword>
<keyword id="KW-1176">Cytoplasmic inwards viral transport</keyword>
<keyword id="KW-0238">DNA-binding</keyword>
<keyword id="KW-1035">Host cytoplasm</keyword>
<keyword id="KW-0945">Host-virus interaction</keyword>
<keyword id="KW-1177">Microtubular inwards viral transport</keyword>
<keyword id="KW-0597">Phosphoprotein</keyword>
<keyword id="KW-0694">RNA-binding</keyword>
<keyword id="KW-1144">T=4 icosahedral capsid protein</keyword>
<keyword id="KW-1163">Viral penetration into host nucleus</keyword>
<keyword id="KW-0946">Virion</keyword>
<keyword id="KW-1160">Virus entry into host cell</keyword>
<gene>
    <name type="primary">C</name>
</gene>
<protein>
    <recommendedName>
        <fullName>Capsid protein</fullName>
    </recommendedName>
    <alternativeName>
        <fullName>Core antigen</fullName>
    </alternativeName>
    <alternativeName>
        <fullName>Core protein</fullName>
    </alternativeName>
    <alternativeName>
        <fullName>HBcAg</fullName>
    </alternativeName>
</protein>
<organism>
    <name type="scientific">Duck hepatitis B virus (isolate white Shanghai duck S31)</name>
    <name type="common">DHBV</name>
    <dbReference type="NCBI Taxonomy" id="10440"/>
    <lineage>
        <taxon>Viruses</taxon>
        <taxon>Riboviria</taxon>
        <taxon>Pararnavirae</taxon>
        <taxon>Artverviricota</taxon>
        <taxon>Revtraviricetes</taxon>
        <taxon>Blubervirales</taxon>
        <taxon>Hepadnaviridae</taxon>
        <taxon>Avihepadnavirus</taxon>
        <taxon>Duck hepatitis B virus</taxon>
    </lineage>
</organism>
<evidence type="ECO:0000250" key="1"/>
<evidence type="ECO:0000250" key="2">
    <source>
        <dbReference type="UniProtKB" id="P03148"/>
    </source>
</evidence>
<evidence type="ECO:0000255" key="3"/>
<evidence type="ECO:0000256" key="4">
    <source>
        <dbReference type="SAM" id="MobiDB-lite"/>
    </source>
</evidence>
<evidence type="ECO:0000305" key="5"/>
<reference key="1">
    <citation type="journal article" date="1989" name="Virology">
        <title>Molecular cloning and sequence analysis of duck hepatitis B virus genomes of a new variant isolated from Shanghai ducks.</title>
        <authorList>
            <person name="Uchida M."/>
            <person name="Esumi M."/>
            <person name="Shikata T."/>
        </authorList>
    </citation>
    <scope>NUCLEOTIDE SEQUENCE [GENOMIC DNA]</scope>
</reference>
<accession>P0C6K2</accession>
<comment type="function">
    <text evidence="1">Self assembles to form an icosahedral capsid. Most capsid appear to be large particles with an icosahedral symmetry of T=4 and consist of 240 copies of capsid protein, though a fraction forms smaller T=3 particles consisting of 180 capsid proteins. Entering capsid are transported along microtubules to the nucleus. Phosphorylation of the capsid is thought to induce exposure of nuclear localization signal in the C-terminal portion of the capsid protein that allows binding to the nuclear pore complex via the importin (karyopherin-) alpha and beta. Capsids are imported in intact form through the nuclear pore into the nuclear basket, where it probably binds NUP153. Only capsids that contain the mature viral genome can release the viral DNA and capsid protein into the nucleoplasm. Immature capsids get stucked in the basket. Capsids encapsulate the pre-genomic RNA and the P protein. Pre-genomic RNA is reverse transcribed into DNA while the capsid is still in the cytoplasm. The capsid can then either be directed to the nucleus, providing more genome for transcription, or bud through the endoplasmic reticulum to provide new virions (By similarity).</text>
</comment>
<comment type="subunit">
    <text evidence="1">Homodimerizes, then multimerizes.</text>
</comment>
<comment type="subcellular location">
    <molecule>Capsid protein</molecule>
    <subcellularLocation>
        <location evidence="2">Virion</location>
    </subcellularLocation>
    <subcellularLocation>
        <location evidence="2">Host cytoplasm</location>
    </subcellularLocation>
</comment>
<comment type="alternative products">
    <event type="alternative initiation"/>
    <isoform>
        <id>P0C6K2-1</id>
        <name>Capsid protein</name>
        <sequence type="displayed"/>
    </isoform>
    <isoform>
        <id>P17191-1</id>
        <name>External core antigen</name>
        <sequence type="external"/>
    </isoform>
</comment>
<comment type="similarity">
    <text evidence="5">Belongs to the avihepadnavirus core antigen family.</text>
</comment>
<name>CAPSD_HPBDW</name>